<keyword id="KW-0028">Amino-acid biosynthesis</keyword>
<keyword id="KW-0963">Cytoplasm</keyword>
<keyword id="KW-0368">Histidine biosynthesis</keyword>
<keyword id="KW-0456">Lyase</keyword>
<keyword id="KW-1185">Reference proteome</keyword>
<organism>
    <name type="scientific">Baumannia cicadellinicola subsp. Homalodisca coagulata</name>
    <dbReference type="NCBI Taxonomy" id="374463"/>
    <lineage>
        <taxon>Bacteria</taxon>
        <taxon>Pseudomonadati</taxon>
        <taxon>Pseudomonadota</taxon>
        <taxon>Gammaproteobacteria</taxon>
        <taxon>Candidatus Palibaumannia</taxon>
    </lineage>
</organism>
<comment type="function">
    <text evidence="1">IGPS catalyzes the conversion of PRFAR and glutamine to IGP, AICAR and glutamate. The HisF subunit catalyzes the cyclization activity that produces IGP and AICAR from PRFAR using the ammonia provided by the HisH subunit.</text>
</comment>
<comment type="catalytic activity">
    <reaction evidence="1">
        <text>5-[(5-phospho-1-deoxy-D-ribulos-1-ylimino)methylamino]-1-(5-phospho-beta-D-ribosyl)imidazole-4-carboxamide + L-glutamine = D-erythro-1-(imidazol-4-yl)glycerol 3-phosphate + 5-amino-1-(5-phospho-beta-D-ribosyl)imidazole-4-carboxamide + L-glutamate + H(+)</text>
        <dbReference type="Rhea" id="RHEA:24793"/>
        <dbReference type="ChEBI" id="CHEBI:15378"/>
        <dbReference type="ChEBI" id="CHEBI:29985"/>
        <dbReference type="ChEBI" id="CHEBI:58278"/>
        <dbReference type="ChEBI" id="CHEBI:58359"/>
        <dbReference type="ChEBI" id="CHEBI:58475"/>
        <dbReference type="ChEBI" id="CHEBI:58525"/>
        <dbReference type="EC" id="4.3.2.10"/>
    </reaction>
</comment>
<comment type="pathway">
    <text evidence="1">Amino-acid biosynthesis; L-histidine biosynthesis; L-histidine from 5-phospho-alpha-D-ribose 1-diphosphate: step 5/9.</text>
</comment>
<comment type="subunit">
    <text evidence="1">Heterodimer of HisH and HisF.</text>
</comment>
<comment type="subcellular location">
    <subcellularLocation>
        <location evidence="1">Cytoplasm</location>
    </subcellularLocation>
</comment>
<comment type="similarity">
    <text evidence="1">Belongs to the HisA/HisF family.</text>
</comment>
<feature type="chain" id="PRO_1000063029" description="Imidazole glycerol phosphate synthase subunit HisF">
    <location>
        <begin position="1"/>
        <end position="258"/>
    </location>
</feature>
<feature type="active site" evidence="1">
    <location>
        <position position="11"/>
    </location>
</feature>
<feature type="active site" evidence="1">
    <location>
        <position position="130"/>
    </location>
</feature>
<dbReference type="EC" id="4.3.2.10" evidence="1"/>
<dbReference type="EMBL" id="CP000238">
    <property type="protein sequence ID" value="ABF14000.1"/>
    <property type="molecule type" value="Genomic_DNA"/>
</dbReference>
<dbReference type="RefSeq" id="WP_011520575.1">
    <property type="nucleotide sequence ID" value="NC_007984.1"/>
</dbReference>
<dbReference type="SMR" id="Q1LT72"/>
<dbReference type="STRING" id="374463.BCI_0399"/>
<dbReference type="KEGG" id="bci:BCI_0399"/>
<dbReference type="HOGENOM" id="CLU_048577_4_0_6"/>
<dbReference type="OrthoDB" id="9781903at2"/>
<dbReference type="UniPathway" id="UPA00031">
    <property type="reaction ID" value="UER00010"/>
</dbReference>
<dbReference type="Proteomes" id="UP000002427">
    <property type="component" value="Chromosome"/>
</dbReference>
<dbReference type="GO" id="GO:0005737">
    <property type="term" value="C:cytoplasm"/>
    <property type="evidence" value="ECO:0007669"/>
    <property type="project" value="UniProtKB-SubCell"/>
</dbReference>
<dbReference type="GO" id="GO:0000107">
    <property type="term" value="F:imidazoleglycerol-phosphate synthase activity"/>
    <property type="evidence" value="ECO:0007669"/>
    <property type="project" value="UniProtKB-UniRule"/>
</dbReference>
<dbReference type="GO" id="GO:0016829">
    <property type="term" value="F:lyase activity"/>
    <property type="evidence" value="ECO:0007669"/>
    <property type="project" value="UniProtKB-KW"/>
</dbReference>
<dbReference type="GO" id="GO:0000105">
    <property type="term" value="P:L-histidine biosynthetic process"/>
    <property type="evidence" value="ECO:0007669"/>
    <property type="project" value="UniProtKB-UniRule"/>
</dbReference>
<dbReference type="CDD" id="cd04731">
    <property type="entry name" value="HisF"/>
    <property type="match status" value="1"/>
</dbReference>
<dbReference type="FunFam" id="3.20.20.70:FF:000006">
    <property type="entry name" value="Imidazole glycerol phosphate synthase subunit HisF"/>
    <property type="match status" value="1"/>
</dbReference>
<dbReference type="Gene3D" id="3.20.20.70">
    <property type="entry name" value="Aldolase class I"/>
    <property type="match status" value="1"/>
</dbReference>
<dbReference type="HAMAP" id="MF_01013">
    <property type="entry name" value="HisF"/>
    <property type="match status" value="1"/>
</dbReference>
<dbReference type="InterPro" id="IPR013785">
    <property type="entry name" value="Aldolase_TIM"/>
</dbReference>
<dbReference type="InterPro" id="IPR006062">
    <property type="entry name" value="His_biosynth"/>
</dbReference>
<dbReference type="InterPro" id="IPR004651">
    <property type="entry name" value="HisF"/>
</dbReference>
<dbReference type="InterPro" id="IPR050064">
    <property type="entry name" value="IGPS_HisA/HisF"/>
</dbReference>
<dbReference type="InterPro" id="IPR011060">
    <property type="entry name" value="RibuloseP-bd_barrel"/>
</dbReference>
<dbReference type="NCBIfam" id="TIGR00735">
    <property type="entry name" value="hisF"/>
    <property type="match status" value="1"/>
</dbReference>
<dbReference type="PANTHER" id="PTHR21235:SF2">
    <property type="entry name" value="IMIDAZOLE GLYCEROL PHOSPHATE SYNTHASE HISHF"/>
    <property type="match status" value="1"/>
</dbReference>
<dbReference type="PANTHER" id="PTHR21235">
    <property type="entry name" value="IMIDAZOLE GLYCEROL PHOSPHATE SYNTHASE SUBUNIT HISF/H IGP SYNTHASE SUBUNIT HISF/H"/>
    <property type="match status" value="1"/>
</dbReference>
<dbReference type="Pfam" id="PF00977">
    <property type="entry name" value="His_biosynth"/>
    <property type="match status" value="1"/>
</dbReference>
<dbReference type="SUPFAM" id="SSF51366">
    <property type="entry name" value="Ribulose-phoshate binding barrel"/>
    <property type="match status" value="1"/>
</dbReference>
<gene>
    <name evidence="1" type="primary">hisF</name>
    <name type="ordered locus">BCI_0399</name>
</gene>
<sequence>MLAKRIIPCLDIHNGQVIKGMQFRNHKVIGDIVPMAQRYAKEGADELVFYDITASSEGRVVDKSWIARVAEVIDIPFCVAGGIKSVAQAGEVISFGADKISINSPALNDPYLISRLADRFGVQCIVASIDTWYDIQLDRYQVNQYTGDENRTKVTNWQTLDWVQEVQKLGAGEIVLNMMNQDGVCRGYDLQQLRLVRQTCHVPLIASGGAGTMQHFQEALINAEVDGVLAASVFHKNIINILELKKFLAREGVEIRLC</sequence>
<accession>Q1LT72</accession>
<protein>
    <recommendedName>
        <fullName evidence="1">Imidazole glycerol phosphate synthase subunit HisF</fullName>
        <ecNumber evidence="1">4.3.2.10</ecNumber>
    </recommendedName>
    <alternativeName>
        <fullName evidence="1">IGP synthase cyclase subunit</fullName>
    </alternativeName>
    <alternativeName>
        <fullName evidence="1">IGP synthase subunit HisF</fullName>
    </alternativeName>
    <alternativeName>
        <fullName evidence="1">ImGP synthase subunit HisF</fullName>
        <shortName evidence="1">IGPS subunit HisF</shortName>
    </alternativeName>
</protein>
<proteinExistence type="inferred from homology"/>
<reference key="1">
    <citation type="journal article" date="2006" name="PLoS Biol.">
        <title>Metabolic complementarity and genomics of the dual bacterial symbiosis of sharpshooters.</title>
        <authorList>
            <person name="Wu D."/>
            <person name="Daugherty S.C."/>
            <person name="Van Aken S.E."/>
            <person name="Pai G.H."/>
            <person name="Watkins K.L."/>
            <person name="Khouri H."/>
            <person name="Tallon L.J."/>
            <person name="Zaborsky J.M."/>
            <person name="Dunbar H.E."/>
            <person name="Tran P.L."/>
            <person name="Moran N.A."/>
            <person name="Eisen J.A."/>
        </authorList>
    </citation>
    <scope>NUCLEOTIDE SEQUENCE [LARGE SCALE GENOMIC DNA]</scope>
</reference>
<evidence type="ECO:0000255" key="1">
    <source>
        <dbReference type="HAMAP-Rule" id="MF_01013"/>
    </source>
</evidence>
<name>HIS6_BAUCH</name>